<gene>
    <name type="primary">MT-ND2</name>
    <name type="synonym">MTND2</name>
    <name type="synonym">NADH2</name>
    <name type="synonym">ND2</name>
</gene>
<evidence type="ECO:0000250" key="1"/>
<evidence type="ECO:0000255" key="2"/>
<evidence type="ECO:0000305" key="3"/>
<name>NU2M_SQUAC</name>
<organism>
    <name type="scientific">Squalus acanthias</name>
    <name type="common">Spiny dogfish</name>
    <dbReference type="NCBI Taxonomy" id="7797"/>
    <lineage>
        <taxon>Eukaryota</taxon>
        <taxon>Metazoa</taxon>
        <taxon>Chordata</taxon>
        <taxon>Craniata</taxon>
        <taxon>Vertebrata</taxon>
        <taxon>Chondrichthyes</taxon>
        <taxon>Elasmobranchii</taxon>
        <taxon>Squalomorphii</taxon>
        <taxon>Squaliformes</taxon>
        <taxon>Squalidae</taxon>
        <taxon>Squalus</taxon>
    </lineage>
</organism>
<proteinExistence type="inferred from homology"/>
<protein>
    <recommendedName>
        <fullName>NADH-ubiquinone oxidoreductase chain 2</fullName>
        <ecNumber>7.1.1.2</ecNumber>
    </recommendedName>
    <alternativeName>
        <fullName>NADH dehydrogenase subunit 2</fullName>
    </alternativeName>
</protein>
<geneLocation type="mitochondrion"/>
<reference key="1">
    <citation type="journal article" date="1999" name="J. Mol. Evol.">
        <title>Phylogenetic studies of complete mitochondrial DNA molecules place cartilaginous fishes within the tree of bony fishes.</title>
        <authorList>
            <person name="Rasmussen A.S."/>
            <person name="Arnason U."/>
        </authorList>
    </citation>
    <scope>NUCLEOTIDE SEQUENCE [GENOMIC DNA]</scope>
</reference>
<keyword id="KW-0249">Electron transport</keyword>
<keyword id="KW-0472">Membrane</keyword>
<keyword id="KW-0496">Mitochondrion</keyword>
<keyword id="KW-0999">Mitochondrion inner membrane</keyword>
<keyword id="KW-0520">NAD</keyword>
<keyword id="KW-0679">Respiratory chain</keyword>
<keyword id="KW-1278">Translocase</keyword>
<keyword id="KW-0812">Transmembrane</keyword>
<keyword id="KW-1133">Transmembrane helix</keyword>
<keyword id="KW-0813">Transport</keyword>
<keyword id="KW-0830">Ubiquinone</keyword>
<feature type="chain" id="PRO_0000117639" description="NADH-ubiquinone oxidoreductase chain 2">
    <location>
        <begin position="1"/>
        <end position="348"/>
    </location>
</feature>
<feature type="transmembrane region" description="Helical" evidence="2">
    <location>
        <begin position="3"/>
        <end position="23"/>
    </location>
</feature>
<feature type="transmembrane region" description="Helical" evidence="2">
    <location>
        <begin position="25"/>
        <end position="45"/>
    </location>
</feature>
<feature type="transmembrane region" description="Helical" evidence="2">
    <location>
        <begin position="67"/>
        <end position="87"/>
    </location>
</feature>
<feature type="transmembrane region" description="Helical" evidence="2">
    <location>
        <begin position="95"/>
        <end position="115"/>
    </location>
</feature>
<feature type="transmembrane region" description="Helical" evidence="2">
    <location>
        <begin position="118"/>
        <end position="138"/>
    </location>
</feature>
<feature type="transmembrane region" description="Helical" evidence="2">
    <location>
        <begin position="149"/>
        <end position="171"/>
    </location>
</feature>
<feature type="transmembrane region" description="Helical" evidence="2">
    <location>
        <begin position="178"/>
        <end position="198"/>
    </location>
</feature>
<feature type="transmembrane region" description="Helical" evidence="2">
    <location>
        <begin position="203"/>
        <end position="223"/>
    </location>
</feature>
<feature type="transmembrane region" description="Helical" evidence="2">
    <location>
        <begin position="240"/>
        <end position="260"/>
    </location>
</feature>
<feature type="transmembrane region" description="Helical" evidence="2">
    <location>
        <begin position="274"/>
        <end position="294"/>
    </location>
</feature>
<feature type="transmembrane region" description="Helical" evidence="2">
    <location>
        <begin position="324"/>
        <end position="344"/>
    </location>
</feature>
<comment type="function">
    <text evidence="1">Core subunit of the mitochondrial membrane respiratory chain NADH dehydrogenase (Complex I) that is believed to belong to the minimal assembly required for catalysis. Complex I functions in the transfer of electrons from NADH to the respiratory chain. The immediate electron acceptor for the enzyme is believed to be ubiquinone (By similarity).</text>
</comment>
<comment type="catalytic activity">
    <reaction>
        <text>a ubiquinone + NADH + 5 H(+)(in) = a ubiquinol + NAD(+) + 4 H(+)(out)</text>
        <dbReference type="Rhea" id="RHEA:29091"/>
        <dbReference type="Rhea" id="RHEA-COMP:9565"/>
        <dbReference type="Rhea" id="RHEA-COMP:9566"/>
        <dbReference type="ChEBI" id="CHEBI:15378"/>
        <dbReference type="ChEBI" id="CHEBI:16389"/>
        <dbReference type="ChEBI" id="CHEBI:17976"/>
        <dbReference type="ChEBI" id="CHEBI:57540"/>
        <dbReference type="ChEBI" id="CHEBI:57945"/>
        <dbReference type="EC" id="7.1.1.2"/>
    </reaction>
</comment>
<comment type="subcellular location">
    <subcellularLocation>
        <location>Mitochondrion inner membrane</location>
        <topology>Multi-pass membrane protein</topology>
    </subcellularLocation>
</comment>
<comment type="similarity">
    <text evidence="3">Belongs to the complex I subunit 2 family.</text>
</comment>
<dbReference type="EC" id="7.1.1.2"/>
<dbReference type="EMBL" id="Y18134">
    <property type="protein sequence ID" value="CAA77050.1"/>
    <property type="molecule type" value="Genomic_DNA"/>
</dbReference>
<dbReference type="PIR" id="T11535">
    <property type="entry name" value="T11535"/>
</dbReference>
<dbReference type="RefSeq" id="NP_008524.1">
    <property type="nucleotide sequence ID" value="NC_002012.1"/>
</dbReference>
<dbReference type="SMR" id="Q9ZZ53"/>
<dbReference type="GeneID" id="808386"/>
<dbReference type="CTD" id="4536"/>
<dbReference type="GO" id="GO:0005743">
    <property type="term" value="C:mitochondrial inner membrane"/>
    <property type="evidence" value="ECO:0007669"/>
    <property type="project" value="UniProtKB-SubCell"/>
</dbReference>
<dbReference type="GO" id="GO:0008137">
    <property type="term" value="F:NADH dehydrogenase (ubiquinone) activity"/>
    <property type="evidence" value="ECO:0007669"/>
    <property type="project" value="UniProtKB-EC"/>
</dbReference>
<dbReference type="GO" id="GO:0006120">
    <property type="term" value="P:mitochondrial electron transport, NADH to ubiquinone"/>
    <property type="evidence" value="ECO:0007669"/>
    <property type="project" value="InterPro"/>
</dbReference>
<dbReference type="InterPro" id="IPR050175">
    <property type="entry name" value="Complex_I_Subunit_2"/>
</dbReference>
<dbReference type="InterPro" id="IPR010933">
    <property type="entry name" value="NADH_DH_su2_C"/>
</dbReference>
<dbReference type="InterPro" id="IPR003917">
    <property type="entry name" value="NADH_UbQ_OxRdtase_chain2"/>
</dbReference>
<dbReference type="InterPro" id="IPR001750">
    <property type="entry name" value="ND/Mrp_TM"/>
</dbReference>
<dbReference type="PANTHER" id="PTHR46552">
    <property type="entry name" value="NADH-UBIQUINONE OXIDOREDUCTASE CHAIN 2"/>
    <property type="match status" value="1"/>
</dbReference>
<dbReference type="PANTHER" id="PTHR46552:SF1">
    <property type="entry name" value="NADH-UBIQUINONE OXIDOREDUCTASE CHAIN 2"/>
    <property type="match status" value="1"/>
</dbReference>
<dbReference type="Pfam" id="PF06444">
    <property type="entry name" value="NADH_dehy_S2_C"/>
    <property type="match status" value="1"/>
</dbReference>
<dbReference type="Pfam" id="PF00361">
    <property type="entry name" value="Proton_antipo_M"/>
    <property type="match status" value="1"/>
</dbReference>
<dbReference type="PRINTS" id="PR01436">
    <property type="entry name" value="NADHDHGNASE2"/>
</dbReference>
<accession>Q9ZZ53</accession>
<sequence>MNPVVLTIIISSLGLGTMMTFIGSHWLLVWMGLEINTLAIIPLMIRQHHPRAVEATTKYFLTQATASALLLFASITNAWSLGEWSLLEMLNPTSATLVTIALALKIGLAPMHFWLPEVLQGLDLITGLILATWQKLAPFAILLQLHPMLNSNLLLFLGVSSTVIGGWGGLNQTQLRKILAYSSIAHLGWMITILHYSPNLTQLNLALYIIMTLTTFLLFKLFNSTKINSIAISTIKSPLLSIIALITLLSLGGLPPLSGFMPKWLILQELTKQDLAIPATIMALAALLSLFFYLRLCYSTTLTMSPNSIYLSSSWRTKSLQPNLILMMATSLSILLLPLTPTIFMLTL</sequence>